<accession>Q8DHP7</accession>
<name>SYH_THEVB</name>
<sequence>MGLQAPRGTRDILPAERVYWQYLETIARQILDRAAYREICTPIFEQTPLFERGIGEATDIVSKEMYTFRDRAQRSLTLRPEGTAGVVRAYIEHGLHSQGGVQRLWYLGPMFRYERPQSGRYRQFHQLGVEVLGSADPRADAEVIAVALDILQALGLKQLTLMLNSVGDREDRSAYRQALVDYLTPYKADLDPDSQERLHRNPLRILDSKDPRTQAIVKEAPRLLDYLSARSRAHFEQVQSLLQALGIAYQINPALVRGLDYYTHTAFEFQDMSLGNEGTVCGGGRYDHLVEELGGPPTPAIGWAMGLERLILLLRDRPLPARNQPYLYMVTRGAAAERQGLILAQQLRHQGYTVDVDLSGSAFGKQVKRADRVGATVCLVIGESEATDGTVQVKWLASGEQVLVPQQELLSENWRSRFLTPHDGLLSH</sequence>
<organism>
    <name type="scientific">Thermosynechococcus vestitus (strain NIES-2133 / IAM M-273 / BP-1)</name>
    <dbReference type="NCBI Taxonomy" id="197221"/>
    <lineage>
        <taxon>Bacteria</taxon>
        <taxon>Bacillati</taxon>
        <taxon>Cyanobacteriota</taxon>
        <taxon>Cyanophyceae</taxon>
        <taxon>Acaryochloridales</taxon>
        <taxon>Thermosynechococcaceae</taxon>
        <taxon>Thermosynechococcus</taxon>
    </lineage>
</organism>
<reference key="1">
    <citation type="journal article" date="2002" name="DNA Res.">
        <title>Complete genome structure of the thermophilic cyanobacterium Thermosynechococcus elongatus BP-1.</title>
        <authorList>
            <person name="Nakamura Y."/>
            <person name="Kaneko T."/>
            <person name="Sato S."/>
            <person name="Ikeuchi M."/>
            <person name="Katoh H."/>
            <person name="Sasamoto S."/>
            <person name="Watanabe A."/>
            <person name="Iriguchi M."/>
            <person name="Kawashima K."/>
            <person name="Kimura T."/>
            <person name="Kishida Y."/>
            <person name="Kiyokawa C."/>
            <person name="Kohara M."/>
            <person name="Matsumoto M."/>
            <person name="Matsuno A."/>
            <person name="Nakazaki N."/>
            <person name="Shimpo S."/>
            <person name="Sugimoto M."/>
            <person name="Takeuchi C."/>
            <person name="Yamada M."/>
            <person name="Tabata S."/>
        </authorList>
    </citation>
    <scope>NUCLEOTIDE SEQUENCE [LARGE SCALE GENOMIC DNA]</scope>
    <source>
        <strain>NIES-2133 / IAM M-273 / BP-1</strain>
    </source>
</reference>
<protein>
    <recommendedName>
        <fullName evidence="1">Histidine--tRNA ligase</fullName>
        <ecNumber evidence="1">6.1.1.21</ecNumber>
    </recommendedName>
    <alternativeName>
        <fullName evidence="1">Histidyl-tRNA synthetase</fullName>
        <shortName evidence="1">HisRS</shortName>
    </alternativeName>
</protein>
<gene>
    <name evidence="1" type="primary">hisS</name>
    <name type="ordered locus">tll1898</name>
</gene>
<dbReference type="EC" id="6.1.1.21" evidence="1"/>
<dbReference type="EMBL" id="BA000039">
    <property type="protein sequence ID" value="BAC09450.1"/>
    <property type="molecule type" value="Genomic_DNA"/>
</dbReference>
<dbReference type="RefSeq" id="NP_682688.1">
    <property type="nucleotide sequence ID" value="NC_004113.1"/>
</dbReference>
<dbReference type="RefSeq" id="WP_011057735.1">
    <property type="nucleotide sequence ID" value="NC_004113.1"/>
</dbReference>
<dbReference type="SMR" id="Q8DHP7"/>
<dbReference type="STRING" id="197221.gene:10748504"/>
<dbReference type="EnsemblBacteria" id="BAC09450">
    <property type="protein sequence ID" value="BAC09450"/>
    <property type="gene ID" value="BAC09450"/>
</dbReference>
<dbReference type="KEGG" id="tel:tll1898"/>
<dbReference type="PATRIC" id="fig|197221.4.peg.1983"/>
<dbReference type="eggNOG" id="COG0124">
    <property type="taxonomic scope" value="Bacteria"/>
</dbReference>
<dbReference type="Proteomes" id="UP000000440">
    <property type="component" value="Chromosome"/>
</dbReference>
<dbReference type="GO" id="GO:0005737">
    <property type="term" value="C:cytoplasm"/>
    <property type="evidence" value="ECO:0007669"/>
    <property type="project" value="UniProtKB-SubCell"/>
</dbReference>
<dbReference type="GO" id="GO:0005524">
    <property type="term" value="F:ATP binding"/>
    <property type="evidence" value="ECO:0007669"/>
    <property type="project" value="UniProtKB-UniRule"/>
</dbReference>
<dbReference type="GO" id="GO:0004821">
    <property type="term" value="F:histidine-tRNA ligase activity"/>
    <property type="evidence" value="ECO:0007669"/>
    <property type="project" value="UniProtKB-UniRule"/>
</dbReference>
<dbReference type="GO" id="GO:0006427">
    <property type="term" value="P:histidyl-tRNA aminoacylation"/>
    <property type="evidence" value="ECO:0007669"/>
    <property type="project" value="UniProtKB-UniRule"/>
</dbReference>
<dbReference type="CDD" id="cd00773">
    <property type="entry name" value="HisRS-like_core"/>
    <property type="match status" value="1"/>
</dbReference>
<dbReference type="CDD" id="cd00859">
    <property type="entry name" value="HisRS_anticodon"/>
    <property type="match status" value="1"/>
</dbReference>
<dbReference type="FunFam" id="3.30.930.10:FF:000005">
    <property type="entry name" value="Histidine--tRNA ligase"/>
    <property type="match status" value="1"/>
</dbReference>
<dbReference type="Gene3D" id="3.40.50.800">
    <property type="entry name" value="Anticodon-binding domain"/>
    <property type="match status" value="1"/>
</dbReference>
<dbReference type="Gene3D" id="3.30.930.10">
    <property type="entry name" value="Bira Bifunctional Protein, Domain 2"/>
    <property type="match status" value="1"/>
</dbReference>
<dbReference type="HAMAP" id="MF_00127">
    <property type="entry name" value="His_tRNA_synth"/>
    <property type="match status" value="1"/>
</dbReference>
<dbReference type="InterPro" id="IPR006195">
    <property type="entry name" value="aa-tRNA-synth_II"/>
</dbReference>
<dbReference type="InterPro" id="IPR045864">
    <property type="entry name" value="aa-tRNA-synth_II/BPL/LPL"/>
</dbReference>
<dbReference type="InterPro" id="IPR004154">
    <property type="entry name" value="Anticodon-bd"/>
</dbReference>
<dbReference type="InterPro" id="IPR036621">
    <property type="entry name" value="Anticodon-bd_dom_sf"/>
</dbReference>
<dbReference type="InterPro" id="IPR015807">
    <property type="entry name" value="His-tRNA-ligase"/>
</dbReference>
<dbReference type="InterPro" id="IPR041715">
    <property type="entry name" value="HisRS-like_core"/>
</dbReference>
<dbReference type="InterPro" id="IPR004516">
    <property type="entry name" value="HisRS/HisZ"/>
</dbReference>
<dbReference type="InterPro" id="IPR033656">
    <property type="entry name" value="HisRS_anticodon"/>
</dbReference>
<dbReference type="NCBIfam" id="TIGR00442">
    <property type="entry name" value="hisS"/>
    <property type="match status" value="1"/>
</dbReference>
<dbReference type="PANTHER" id="PTHR43707:SF1">
    <property type="entry name" value="HISTIDINE--TRNA LIGASE, MITOCHONDRIAL-RELATED"/>
    <property type="match status" value="1"/>
</dbReference>
<dbReference type="PANTHER" id="PTHR43707">
    <property type="entry name" value="HISTIDYL-TRNA SYNTHETASE"/>
    <property type="match status" value="1"/>
</dbReference>
<dbReference type="Pfam" id="PF03129">
    <property type="entry name" value="HGTP_anticodon"/>
    <property type="match status" value="1"/>
</dbReference>
<dbReference type="Pfam" id="PF13393">
    <property type="entry name" value="tRNA-synt_His"/>
    <property type="match status" value="1"/>
</dbReference>
<dbReference type="PIRSF" id="PIRSF001549">
    <property type="entry name" value="His-tRNA_synth"/>
    <property type="match status" value="1"/>
</dbReference>
<dbReference type="SUPFAM" id="SSF52954">
    <property type="entry name" value="Class II aaRS ABD-related"/>
    <property type="match status" value="1"/>
</dbReference>
<dbReference type="SUPFAM" id="SSF55681">
    <property type="entry name" value="Class II aaRS and biotin synthetases"/>
    <property type="match status" value="1"/>
</dbReference>
<dbReference type="PROSITE" id="PS50862">
    <property type="entry name" value="AA_TRNA_LIGASE_II"/>
    <property type="match status" value="1"/>
</dbReference>
<comment type="catalytic activity">
    <reaction evidence="1">
        <text>tRNA(His) + L-histidine + ATP = L-histidyl-tRNA(His) + AMP + diphosphate + H(+)</text>
        <dbReference type="Rhea" id="RHEA:17313"/>
        <dbReference type="Rhea" id="RHEA-COMP:9665"/>
        <dbReference type="Rhea" id="RHEA-COMP:9689"/>
        <dbReference type="ChEBI" id="CHEBI:15378"/>
        <dbReference type="ChEBI" id="CHEBI:30616"/>
        <dbReference type="ChEBI" id="CHEBI:33019"/>
        <dbReference type="ChEBI" id="CHEBI:57595"/>
        <dbReference type="ChEBI" id="CHEBI:78442"/>
        <dbReference type="ChEBI" id="CHEBI:78527"/>
        <dbReference type="ChEBI" id="CHEBI:456215"/>
        <dbReference type="EC" id="6.1.1.21"/>
    </reaction>
</comment>
<comment type="subunit">
    <text evidence="1">Homodimer.</text>
</comment>
<comment type="subcellular location">
    <subcellularLocation>
        <location evidence="1">Cytoplasm</location>
    </subcellularLocation>
</comment>
<comment type="similarity">
    <text evidence="1">Belongs to the class-II aminoacyl-tRNA synthetase family.</text>
</comment>
<evidence type="ECO:0000255" key="1">
    <source>
        <dbReference type="HAMAP-Rule" id="MF_00127"/>
    </source>
</evidence>
<proteinExistence type="inferred from homology"/>
<feature type="chain" id="PRO_0000136276" description="Histidine--tRNA ligase">
    <location>
        <begin position="1"/>
        <end position="428"/>
    </location>
</feature>
<keyword id="KW-0030">Aminoacyl-tRNA synthetase</keyword>
<keyword id="KW-0067">ATP-binding</keyword>
<keyword id="KW-0963">Cytoplasm</keyword>
<keyword id="KW-0436">Ligase</keyword>
<keyword id="KW-0547">Nucleotide-binding</keyword>
<keyword id="KW-0648">Protein biosynthesis</keyword>
<keyword id="KW-1185">Reference proteome</keyword>